<evidence type="ECO:0000250" key="1">
    <source>
        <dbReference type="UniProtKB" id="P38803"/>
    </source>
</evidence>
<evidence type="ECO:0000256" key="2">
    <source>
        <dbReference type="SAM" id="MobiDB-lite"/>
    </source>
</evidence>
<evidence type="ECO:0000305" key="3"/>
<accession>A1DL11</accession>
<keyword id="KW-0539">Nucleus</keyword>
<keyword id="KW-1185">Reference proteome</keyword>
<keyword id="KW-0690">Ribosome biogenesis</keyword>
<keyword id="KW-0698">rRNA processing</keyword>
<proteinExistence type="inferred from homology"/>
<gene>
    <name type="primary">ipi1</name>
    <name type="ORF">NFIA_048190</name>
</gene>
<feature type="chain" id="PRO_0000308724" description="Pre-rRNA-processing protein ipi1">
    <location>
        <begin position="1"/>
        <end position="345"/>
    </location>
</feature>
<feature type="region of interest" description="Disordered" evidence="2">
    <location>
        <begin position="1"/>
        <end position="30"/>
    </location>
</feature>
<feature type="compositionally biased region" description="Basic residues" evidence="2">
    <location>
        <begin position="1"/>
        <end position="11"/>
    </location>
</feature>
<organism>
    <name type="scientific">Neosartorya fischeri (strain ATCC 1020 / DSM 3700 / CBS 544.65 / FGSC A1164 / JCM 1740 / NRRL 181 / WB 181)</name>
    <name type="common">Aspergillus fischerianus</name>
    <dbReference type="NCBI Taxonomy" id="331117"/>
    <lineage>
        <taxon>Eukaryota</taxon>
        <taxon>Fungi</taxon>
        <taxon>Dikarya</taxon>
        <taxon>Ascomycota</taxon>
        <taxon>Pezizomycotina</taxon>
        <taxon>Eurotiomycetes</taxon>
        <taxon>Eurotiomycetidae</taxon>
        <taxon>Eurotiales</taxon>
        <taxon>Aspergillaceae</taxon>
        <taxon>Aspergillus</taxon>
        <taxon>Aspergillus subgen. Fumigati</taxon>
    </lineage>
</organism>
<protein>
    <recommendedName>
        <fullName>Pre-rRNA-processing protein ipi1</fullName>
    </recommendedName>
</protein>
<sequence length="345" mass="37465">MGSSTKKKKEKKKDFQKTKLKVGKTKAKPDNFTDTSFRAKTITLNQQSLHITAPSSDAQFTHHVSLLSSKSDTQRRDSLAHLTTSFVSRPVDSPLPQPVSVLLPTLLPLILDASSSVRTQLLKLLRALPANDIQDHVPQLLPYIRAGMTHLAADIRVSAVEVLSWLVYVAGAEVVSCAGGWIKTLNCFLSVLGWHTEESSKWSGNRASFGKSGAKGQPMVKVLAALAVFLQAGIGRPDDGMGDSSDEDSAMGVSGWEFPLCHAAQHMVPQATAPFVHLNLFGQPRDEEGEMYETREDRYRVFENRFLRAVQRGLEGARSEGGEVGRASAGVSKVLKEAIAYGPGA</sequence>
<reference key="1">
    <citation type="journal article" date="2008" name="PLoS Genet.">
        <title>Genomic islands in the pathogenic filamentous fungus Aspergillus fumigatus.</title>
        <authorList>
            <person name="Fedorova N.D."/>
            <person name="Khaldi N."/>
            <person name="Joardar V.S."/>
            <person name="Maiti R."/>
            <person name="Amedeo P."/>
            <person name="Anderson M.J."/>
            <person name="Crabtree J."/>
            <person name="Silva J.C."/>
            <person name="Badger J.H."/>
            <person name="Albarraq A."/>
            <person name="Angiuoli S."/>
            <person name="Bussey H."/>
            <person name="Bowyer P."/>
            <person name="Cotty P.J."/>
            <person name="Dyer P.S."/>
            <person name="Egan A."/>
            <person name="Galens K."/>
            <person name="Fraser-Liggett C.M."/>
            <person name="Haas B.J."/>
            <person name="Inman J.M."/>
            <person name="Kent R."/>
            <person name="Lemieux S."/>
            <person name="Malavazi I."/>
            <person name="Orvis J."/>
            <person name="Roemer T."/>
            <person name="Ronning C.M."/>
            <person name="Sundaram J.P."/>
            <person name="Sutton G."/>
            <person name="Turner G."/>
            <person name="Venter J.C."/>
            <person name="White O.R."/>
            <person name="Whitty B.R."/>
            <person name="Youngman P."/>
            <person name="Wolfe K.H."/>
            <person name="Goldman G.H."/>
            <person name="Wortman J.R."/>
            <person name="Jiang B."/>
            <person name="Denning D.W."/>
            <person name="Nierman W.C."/>
        </authorList>
    </citation>
    <scope>NUCLEOTIDE SEQUENCE [LARGE SCALE GENOMIC DNA]</scope>
    <source>
        <strain>ATCC 1020 / DSM 3700 / CBS 544.65 / FGSC A1164 / JCM 1740 / NRRL 181 / WB 181</strain>
    </source>
</reference>
<dbReference type="EMBL" id="DS027698">
    <property type="protein sequence ID" value="EAW15482.1"/>
    <property type="molecule type" value="Genomic_DNA"/>
</dbReference>
<dbReference type="RefSeq" id="XP_001257379.1">
    <property type="nucleotide sequence ID" value="XM_001257378.1"/>
</dbReference>
<dbReference type="SMR" id="A1DL11"/>
<dbReference type="STRING" id="331117.A1DL11"/>
<dbReference type="EnsemblFungi" id="EAW15482">
    <property type="protein sequence ID" value="EAW15482"/>
    <property type="gene ID" value="NFIA_048190"/>
</dbReference>
<dbReference type="GeneID" id="4583893"/>
<dbReference type="KEGG" id="nfi:NFIA_048190"/>
<dbReference type="VEuPathDB" id="FungiDB:NFIA_048190"/>
<dbReference type="eggNOG" id="KOG2149">
    <property type="taxonomic scope" value="Eukaryota"/>
</dbReference>
<dbReference type="HOGENOM" id="CLU_050252_2_0_1"/>
<dbReference type="OMA" id="CAGGWVK"/>
<dbReference type="OrthoDB" id="361362at2759"/>
<dbReference type="Proteomes" id="UP000006702">
    <property type="component" value="Unassembled WGS sequence"/>
</dbReference>
<dbReference type="GO" id="GO:0005634">
    <property type="term" value="C:nucleus"/>
    <property type="evidence" value="ECO:0007669"/>
    <property type="project" value="UniProtKB-SubCell"/>
</dbReference>
<dbReference type="GO" id="GO:0120330">
    <property type="term" value="C:rixosome complex"/>
    <property type="evidence" value="ECO:0007669"/>
    <property type="project" value="TreeGrafter"/>
</dbReference>
<dbReference type="GO" id="GO:0006364">
    <property type="term" value="P:rRNA processing"/>
    <property type="evidence" value="ECO:0007669"/>
    <property type="project" value="UniProtKB-KW"/>
</dbReference>
<dbReference type="FunFam" id="1.25.10.10:FF:001012">
    <property type="entry name" value="Pre-rRNA-processing protein ipi1"/>
    <property type="match status" value="1"/>
</dbReference>
<dbReference type="Gene3D" id="1.25.10.10">
    <property type="entry name" value="Leucine-rich Repeat Variant"/>
    <property type="match status" value="1"/>
</dbReference>
<dbReference type="InterPro" id="IPR011989">
    <property type="entry name" value="ARM-like"/>
</dbReference>
<dbReference type="InterPro" id="IPR016024">
    <property type="entry name" value="ARM-type_fold"/>
</dbReference>
<dbReference type="InterPro" id="IPR024679">
    <property type="entry name" value="Ipi1_N"/>
</dbReference>
<dbReference type="PANTHER" id="PTHR16056">
    <property type="entry name" value="REGULATOR OF MICROTUBULE DYNAMICS PROTEIN"/>
    <property type="match status" value="1"/>
</dbReference>
<dbReference type="PANTHER" id="PTHR16056:SF2">
    <property type="entry name" value="TESTIS-EXPRESSED PROTEIN 10"/>
    <property type="match status" value="1"/>
</dbReference>
<dbReference type="Pfam" id="PF12333">
    <property type="entry name" value="Ipi1_N"/>
    <property type="match status" value="1"/>
</dbReference>
<dbReference type="SUPFAM" id="SSF48371">
    <property type="entry name" value="ARM repeat"/>
    <property type="match status" value="1"/>
</dbReference>
<name>IPI1_NEOFI</name>
<comment type="function">
    <text evidence="1">Component of the RIX1 complex required for processing of ITS2 sequences from 35S pre-rRNA.</text>
</comment>
<comment type="subunit">
    <text evidence="1">Component of the RIX1 complex, composed of ipi1, rix1/ipi2 and ipi3 in a 1:2:2 stoichiometry. The complex interacts (via rix1) with mdn1 (via its hexameric AAA ATPase ring) and the pre-60S ribosome particles.</text>
</comment>
<comment type="subcellular location">
    <subcellularLocation>
        <location evidence="1">Nucleus</location>
    </subcellularLocation>
</comment>
<comment type="similarity">
    <text evidence="3">Belongs to the IPI1/TEX10 family.</text>
</comment>